<name>BACC_BACLI</name>
<evidence type="ECO:0000255" key="1">
    <source>
        <dbReference type="PROSITE-ProRule" id="PRU00258"/>
    </source>
</evidence>
<evidence type="ECO:0000256" key="2">
    <source>
        <dbReference type="SAM" id="MobiDB-lite"/>
    </source>
</evidence>
<evidence type="ECO:0000305" key="3"/>
<dbReference type="EC" id="5.1.1.13"/>
<dbReference type="EC" id="5.1.1.11"/>
<dbReference type="EMBL" id="AF007865">
    <property type="protein sequence ID" value="AAC06348.1"/>
    <property type="molecule type" value="Genomic_DNA"/>
</dbReference>
<dbReference type="PIR" id="T31679">
    <property type="entry name" value="T31679"/>
</dbReference>
<dbReference type="SMR" id="O68008"/>
<dbReference type="ESTHER" id="bacli-bacc">
    <property type="family name" value="Thioesterase"/>
</dbReference>
<dbReference type="UniPathway" id="UPA00179"/>
<dbReference type="GO" id="GO:0005737">
    <property type="term" value="C:cytoplasm"/>
    <property type="evidence" value="ECO:0007669"/>
    <property type="project" value="TreeGrafter"/>
</dbReference>
<dbReference type="GO" id="GO:0047689">
    <property type="term" value="F:aspartate racemase activity"/>
    <property type="evidence" value="ECO:0007669"/>
    <property type="project" value="UniProtKB-EC"/>
</dbReference>
<dbReference type="GO" id="GO:0005524">
    <property type="term" value="F:ATP binding"/>
    <property type="evidence" value="ECO:0007669"/>
    <property type="project" value="UniProtKB-KW"/>
</dbReference>
<dbReference type="GO" id="GO:0016787">
    <property type="term" value="F:hydrolase activity"/>
    <property type="evidence" value="ECO:0007669"/>
    <property type="project" value="UniProtKB-KW"/>
</dbReference>
<dbReference type="GO" id="GO:0016874">
    <property type="term" value="F:ligase activity"/>
    <property type="evidence" value="ECO:0007669"/>
    <property type="project" value="UniProtKB-KW"/>
</dbReference>
<dbReference type="GO" id="GO:0047462">
    <property type="term" value="F:phenylalanine racemase (ATP-hydrolyzing) activity"/>
    <property type="evidence" value="ECO:0007669"/>
    <property type="project" value="UniProtKB-EC"/>
</dbReference>
<dbReference type="GO" id="GO:0031177">
    <property type="term" value="F:phosphopantetheine binding"/>
    <property type="evidence" value="ECO:0007669"/>
    <property type="project" value="InterPro"/>
</dbReference>
<dbReference type="GO" id="GO:0043041">
    <property type="term" value="P:amino acid activation for nonribosomal peptide biosynthetic process"/>
    <property type="evidence" value="ECO:0007669"/>
    <property type="project" value="TreeGrafter"/>
</dbReference>
<dbReference type="GO" id="GO:0017000">
    <property type="term" value="P:antibiotic biosynthetic process"/>
    <property type="evidence" value="ECO:0007669"/>
    <property type="project" value="UniProtKB-KW"/>
</dbReference>
<dbReference type="GO" id="GO:0008610">
    <property type="term" value="P:lipid biosynthetic process"/>
    <property type="evidence" value="ECO:0007669"/>
    <property type="project" value="UniProtKB-ARBA"/>
</dbReference>
<dbReference type="GO" id="GO:0044550">
    <property type="term" value="P:secondary metabolite biosynthetic process"/>
    <property type="evidence" value="ECO:0007669"/>
    <property type="project" value="TreeGrafter"/>
</dbReference>
<dbReference type="CDD" id="cd05930">
    <property type="entry name" value="A_NRPS"/>
    <property type="match status" value="2"/>
</dbReference>
<dbReference type="CDD" id="cd17655">
    <property type="entry name" value="A_NRPS_Bac"/>
    <property type="match status" value="2"/>
</dbReference>
<dbReference type="CDD" id="cd12117">
    <property type="entry name" value="A_NRPS_Srf_like"/>
    <property type="match status" value="1"/>
</dbReference>
<dbReference type="CDD" id="cd19543">
    <property type="entry name" value="DCL_NRPS"/>
    <property type="match status" value="3"/>
</dbReference>
<dbReference type="CDD" id="cd19534">
    <property type="entry name" value="E_NRPS"/>
    <property type="match status" value="2"/>
</dbReference>
<dbReference type="CDD" id="cd19531">
    <property type="entry name" value="LCL_NRPS-like"/>
    <property type="match status" value="2"/>
</dbReference>
<dbReference type="FunFam" id="3.30.300.30:FF:000010">
    <property type="entry name" value="Enterobactin synthetase component F"/>
    <property type="match status" value="5"/>
</dbReference>
<dbReference type="FunFam" id="3.30.559.10:FF:000012">
    <property type="entry name" value="Non-ribosomal peptide synthetase"/>
    <property type="match status" value="2"/>
</dbReference>
<dbReference type="FunFam" id="3.30.559.30:FF:000001">
    <property type="entry name" value="Non-ribosomal peptide synthetase"/>
    <property type="match status" value="2"/>
</dbReference>
<dbReference type="FunFam" id="3.40.50.12780:FF:000012">
    <property type="entry name" value="Non-ribosomal peptide synthetase"/>
    <property type="match status" value="5"/>
</dbReference>
<dbReference type="FunFam" id="3.40.50.980:FF:000001">
    <property type="entry name" value="Non-ribosomal peptide synthetase"/>
    <property type="match status" value="5"/>
</dbReference>
<dbReference type="FunFam" id="2.30.38.10:FF:000001">
    <property type="entry name" value="Non-ribosomal peptide synthetase PvdI"/>
    <property type="match status" value="5"/>
</dbReference>
<dbReference type="FunFam" id="1.10.1200.10:FF:000005">
    <property type="entry name" value="Nonribosomal peptide synthetase 1"/>
    <property type="match status" value="4"/>
</dbReference>
<dbReference type="Gene3D" id="3.30.300.30">
    <property type="match status" value="5"/>
</dbReference>
<dbReference type="Gene3D" id="3.40.50.980">
    <property type="match status" value="10"/>
</dbReference>
<dbReference type="Gene3D" id="1.10.1200.10">
    <property type="entry name" value="ACP-like"/>
    <property type="match status" value="5"/>
</dbReference>
<dbReference type="Gene3D" id="3.40.50.1820">
    <property type="entry name" value="alpha/beta hydrolase"/>
    <property type="match status" value="1"/>
</dbReference>
<dbReference type="Gene3D" id="3.30.559.10">
    <property type="entry name" value="Chloramphenicol acetyltransferase-like domain"/>
    <property type="match status" value="7"/>
</dbReference>
<dbReference type="Gene3D" id="1.10.287.490">
    <property type="entry name" value="Helix hairpin bin"/>
    <property type="match status" value="1"/>
</dbReference>
<dbReference type="Gene3D" id="2.30.38.10">
    <property type="entry name" value="Luciferase, Domain 3"/>
    <property type="match status" value="5"/>
</dbReference>
<dbReference type="Gene3D" id="3.30.559.30">
    <property type="entry name" value="Nonribosomal peptide synthetase, condensation domain"/>
    <property type="match status" value="7"/>
</dbReference>
<dbReference type="InterPro" id="IPR010071">
    <property type="entry name" value="AA_adenyl_dom"/>
</dbReference>
<dbReference type="InterPro" id="IPR029058">
    <property type="entry name" value="AB_hydrolase_fold"/>
</dbReference>
<dbReference type="InterPro" id="IPR036736">
    <property type="entry name" value="ACP-like_sf"/>
</dbReference>
<dbReference type="InterPro" id="IPR025110">
    <property type="entry name" value="AMP-bd_C"/>
</dbReference>
<dbReference type="InterPro" id="IPR045851">
    <property type="entry name" value="AMP-bd_C_sf"/>
</dbReference>
<dbReference type="InterPro" id="IPR020845">
    <property type="entry name" value="AMP-binding_CS"/>
</dbReference>
<dbReference type="InterPro" id="IPR000873">
    <property type="entry name" value="AMP-dep_synth/lig_dom"/>
</dbReference>
<dbReference type="InterPro" id="IPR023213">
    <property type="entry name" value="CAT-like_dom_sf"/>
</dbReference>
<dbReference type="InterPro" id="IPR001242">
    <property type="entry name" value="Condensatn"/>
</dbReference>
<dbReference type="InterPro" id="IPR010060">
    <property type="entry name" value="NRPS_synth"/>
</dbReference>
<dbReference type="InterPro" id="IPR020806">
    <property type="entry name" value="PKS_PP-bd"/>
</dbReference>
<dbReference type="InterPro" id="IPR009081">
    <property type="entry name" value="PP-bd_ACP"/>
</dbReference>
<dbReference type="InterPro" id="IPR006162">
    <property type="entry name" value="Ppantetheine_attach_site"/>
</dbReference>
<dbReference type="InterPro" id="IPR001031">
    <property type="entry name" value="Thioesterase"/>
</dbReference>
<dbReference type="NCBIfam" id="TIGR01733">
    <property type="entry name" value="AA-adenyl-dom"/>
    <property type="match status" value="5"/>
</dbReference>
<dbReference type="NCBIfam" id="TIGR01720">
    <property type="entry name" value="NRPS-para261"/>
    <property type="match status" value="2"/>
</dbReference>
<dbReference type="NCBIfam" id="NF003417">
    <property type="entry name" value="PRK04813.1"/>
    <property type="match status" value="5"/>
</dbReference>
<dbReference type="NCBIfam" id="NF004282">
    <property type="entry name" value="PRK05691.1"/>
    <property type="match status" value="6"/>
</dbReference>
<dbReference type="PANTHER" id="PTHR45527:SF1">
    <property type="entry name" value="FATTY ACID SYNTHASE"/>
    <property type="match status" value="1"/>
</dbReference>
<dbReference type="PANTHER" id="PTHR45527">
    <property type="entry name" value="NONRIBOSOMAL PEPTIDE SYNTHETASE"/>
    <property type="match status" value="1"/>
</dbReference>
<dbReference type="Pfam" id="PF00501">
    <property type="entry name" value="AMP-binding"/>
    <property type="match status" value="5"/>
</dbReference>
<dbReference type="Pfam" id="PF13193">
    <property type="entry name" value="AMP-binding_C"/>
    <property type="match status" value="5"/>
</dbReference>
<dbReference type="Pfam" id="PF00668">
    <property type="entry name" value="Condensation"/>
    <property type="match status" value="7"/>
</dbReference>
<dbReference type="Pfam" id="PF00550">
    <property type="entry name" value="PP-binding"/>
    <property type="match status" value="5"/>
</dbReference>
<dbReference type="Pfam" id="PF00975">
    <property type="entry name" value="Thioesterase"/>
    <property type="match status" value="1"/>
</dbReference>
<dbReference type="SMART" id="SM00823">
    <property type="entry name" value="PKS_PP"/>
    <property type="match status" value="5"/>
</dbReference>
<dbReference type="SUPFAM" id="SSF56801">
    <property type="entry name" value="Acetyl-CoA synthetase-like"/>
    <property type="match status" value="5"/>
</dbReference>
<dbReference type="SUPFAM" id="SSF47336">
    <property type="entry name" value="ACP-like"/>
    <property type="match status" value="5"/>
</dbReference>
<dbReference type="SUPFAM" id="SSF53474">
    <property type="entry name" value="alpha/beta-Hydrolases"/>
    <property type="match status" value="1"/>
</dbReference>
<dbReference type="SUPFAM" id="SSF52777">
    <property type="entry name" value="CoA-dependent acyltransferases"/>
    <property type="match status" value="14"/>
</dbReference>
<dbReference type="PROSITE" id="PS00455">
    <property type="entry name" value="AMP_BINDING"/>
    <property type="match status" value="5"/>
</dbReference>
<dbReference type="PROSITE" id="PS50075">
    <property type="entry name" value="CARRIER"/>
    <property type="match status" value="5"/>
</dbReference>
<dbReference type="PROSITE" id="PS00012">
    <property type="entry name" value="PHOSPHOPANTETHEINE"/>
    <property type="match status" value="4"/>
</dbReference>
<organism>
    <name type="scientific">Bacillus licheniformis</name>
    <dbReference type="NCBI Taxonomy" id="1402"/>
    <lineage>
        <taxon>Bacteria</taxon>
        <taxon>Bacillati</taxon>
        <taxon>Bacillota</taxon>
        <taxon>Bacilli</taxon>
        <taxon>Bacillales</taxon>
        <taxon>Bacillaceae</taxon>
        <taxon>Bacillus</taxon>
    </lineage>
</organism>
<comment type="function">
    <text>Induces peptide synthesis, activates and incorporates five amino acids, forms a thiazoline ring between the first two amino acids and incorporates a D-glutamine in the fourth position.</text>
</comment>
<comment type="catalytic activity">
    <reaction>
        <text>L-aspartate = D-aspartate</text>
        <dbReference type="Rhea" id="RHEA:14973"/>
        <dbReference type="ChEBI" id="CHEBI:29990"/>
        <dbReference type="ChEBI" id="CHEBI:29991"/>
        <dbReference type="EC" id="5.1.1.13"/>
    </reaction>
</comment>
<comment type="catalytic activity">
    <reaction>
        <text>L-phenylalanine + ATP + H2O = D-phenylalanine + AMP + diphosphate + H(+)</text>
        <dbReference type="Rhea" id="RHEA:20201"/>
        <dbReference type="ChEBI" id="CHEBI:15377"/>
        <dbReference type="ChEBI" id="CHEBI:15378"/>
        <dbReference type="ChEBI" id="CHEBI:30616"/>
        <dbReference type="ChEBI" id="CHEBI:33019"/>
        <dbReference type="ChEBI" id="CHEBI:57981"/>
        <dbReference type="ChEBI" id="CHEBI:58095"/>
        <dbReference type="ChEBI" id="CHEBI:456215"/>
        <dbReference type="EC" id="5.1.1.11"/>
    </reaction>
</comment>
<comment type="cofactor">
    <cofactor evidence="3">
        <name>pantetheine 4'-phosphate</name>
        <dbReference type="ChEBI" id="CHEBI:47942"/>
    </cofactor>
    <text evidence="3">Binds 5 phosphopantetheines covalently.</text>
</comment>
<comment type="pathway">
    <text>Antibiotic biosynthesis; bacitracin biosynthesis.</text>
</comment>
<comment type="subunit">
    <text>Large multienzyme complex of BA1, BA2 and BA3.</text>
</comment>
<comment type="domain">
    <text>Consists of five modules with two epimerization domains in the second and fourth modules, and a putative C-terminal thioesterase domain. Each module incorporates one amino acid into the peptide product and can be further subdivided into domains responsible for substrate adenylation, thiolation, condensation (not for the initiation module), and epimerization (optional), and N methylation (optional).</text>
</comment>
<comment type="miscellaneous">
    <text>Bacitracin is a mixture of at least ten cyclic dodecapeptides, that differ by one or two amino acids. The most abundant is bacitracin A, a branched cyclic dodecapeptide. It contains an N-terminal linear pentapeptide moiety (Ile-Cys-Leu-D-Glu-Ile) with an isoleucine-cysteine thiazoline condensation product and a C-terminal heptapeptide ring (Lys-D-Orn-Ile-D-Phe-His-D-Asp-Asn), in which the free alpha-carboxy group of the C-terminal Asn is bound to the epsilon-amino group of Lys.</text>
</comment>
<comment type="similarity">
    <text evidence="3">Belongs to the ATP-dependent AMP-binding enzyme family.</text>
</comment>
<accession>O68008</accession>
<proteinExistence type="inferred from homology"/>
<sequence>MKTKVEKIYPLSNMQKGMLFHAMKDEASHAYFEQFIIELKGDVDERMFEESLNEVMKRHEILRASFHHRLDEPLHVIIKDRHMKFDYLDIRGRHDQDGVLERYLAEDRQKGFDLAKDTLMRACLIRMSDDSYQFVWTYHHILLDGWCLGIILDELLTIYEMKRKGQNHQLEDPRPYSDYIKWLEDQDKEEAQSYWESYLSGYDQKNSLPKLRTPSETGFKRREKTIECSKELTNRLIKLANRNHVTINTVLQSIWGVILAKYNNSEDVVFGTVVSGRDAEVEGIETMVGVFINTIPTRIRLDKDKLFKDVLRQTQADALESSRYNYMNLAEVQALSELKNDLIDHVMVFENYAVDQKAFEEKNDVGFEMVNVSGEEQTNYHFSISAALDDQLKLLFIYDENVYDTTIIETLEKHIITVAEQVAEDETQTLRDINLVSKEEQHRILDTFNDTKTGYPKDKPLHELFEEQAMKTPDHTALVFGAQRMTYRELNEKANQTARLLREKGIGRGSIAAIIADRSFEMIIGIIGILKAGGAYLPIDPETPKHRIAFMLSDTKAGVLLAQGKAADGIDCEADIIHLDKGVADGFSKKRLSSVNDSGDTAYIIYTSGSTGMPKGVVTPHYSAARVVKNTNYIDITEDDAILQLSNYSFDGSVFDIFGALLNGASLVLIEKETVLNTHELAEVIKKEQVSVMFITTALFNTLADINIGCLAKLRKIFLGGERASIPHVRKVLNHVGRDKLIHVYGPTESTVYATYYFINEIDDEAETIPIGSPLANTSVLIMDEAGKLLPIGVPGELCIAGDGLSKGYLNREELTAEKFIPHPFIPGERLYKTGDLAKWLPDGNIEFIGRIDHQVKIRGFRIELGEIESRLEMHEDINETIVTVREDEESRPYICAYITANREISLDELKGFLGEKLPEYMIPAYFVKMDKLPLTKNGKVDRKALPEPDRTAGAENEYEAPRNETEEKLAAIWRDILKVEKSGINDHFFEMGGHSLKAAAMAARIRKELKAEIPLGQIFKTPTIKGLGEYIRSTKDSVYSSIQKVEEKEYYRLSSAQKRLYILDQIEGSGLSYNIPFTMKVKGRFDIRRFENALKTIIQRHEALRTSFLMADGEPVQKIEKEVDFSIKCSKIQSLSIQEIIKQFVRPFDLKKAPLFRTEVVKVDDEEHIILFDMHHIISDGASMGVLTKEICDLYGGKELKPLSLQYKDYSEWQRDFYQKDEMKRQKEYWLNIFKGEIPVLNMPTDYPRPQMHSVEGDRIGFAIDGELTKKLKRIAKDNGATMYMLLLAAYTVLLRTYSGQEDVIIGTPIQGRKHHELKHVIGMFVNTLAMRNHPKGDKTFAEYLQDVKETALKAYENQDYQFDDLVEQLDLERDMSRNPLFDTMFVLQNLEKADAEIEGLTFEPFESDIHISKFDLTLSAIEKDSKIEFDLEYCTKLFKRETVERMAAHFVRVLEDISKRTDKRLDQIEAMSEDEKNTLLYRFNDTKTDAPTDKTICQLFAERAETSPDKTAVVFEDQTLTYRQLHERSNQLARFLREKGVQPDTAVGIMVDRSPEMIIGLLGILKAGGAYLPLDPAYPEDRIKYILGDSQTKFLLSEEALIKKRAFIKEADMINIDIHDKQIAAQDAAQLEPVSRSGDLAYIIYTSGSTGKPKGVLIEQKGLSNLVSAVVKLMHLNTGSRVIQFASLSFDASAFEIFPALAAGSALVLGRQEEMMPGQPLTSFLRQYNITHATLPPTVLDVLNESGLENLKVIVSAGSACSEELAKRWSGNRLFINAYGPTETTVCATAGIYEGSGRPHIGSPIANTNVYVLDQNQKPVPTGVVGELCVGGMSLARGYLNRPELTAEKFISHPFASGERLYRTGDLARWLPDGHLEFLGRIDHQVKIRGYRIELGEIENQLLKLDKIDEAAVIARKDDDHSDYLCAYIVSKEDWTSTEISEWLEKELPHYMIPAYFVRLDKLPLTSNDKVDRKALPAPDRHVATGAVYEAPRNDTEAKLVDIWRDVLGAGDIGISHHFFAAGGDSIKALQIVSRLSRLGLKLEMKDLFANPRIKDLAKYVKKQSQRKNANTIVTGHAELTPIQKWYFANNKEELDHFNQSFVLFRKGGFDESCVKKAFNKIMEQHDALRMIYEEKGGDFIQYNRSFREDLFDLDVYDVRGLDRQAEKVYELATSIQKLSSIRKGKLVHLGIFRADEGDHLLIVIHHLVVDGVSWRILFEDFETLYSQALKGQTLEIGYKTDSYQEFARRLKAYAHSRTLSKEAEYWRNIAKARVRFIPPKNVLKEDVYENSTTLSIKLGKEATADLLRNTNRAYNTEINDILLTALLTGARDITGENKLKVMMEGHGREDILEGVDITRTIGWFTTMYPVLLDAGEEKALSQQIKMVKETLRKIPNKGIGYGLLKYMAEDPDFTNEEKARISFNYLGDIDADMNRGEFSGSSFSEGESIGGKIARSHSIEINAIVMNHELVIHTTFNQMEYEKDTISRLNHQLKERLEQIIKHCTQQTESERTPSDYGDTNISLAELEEIKGKYRSAIEKIYPLANMQKGMLFHAIEDHTSDAYFQQTVMDIEGYVDPAILEASFNDIMKRHEILRASYEYEIVEEPRQIIIENRSIDFTYFNIAKSSAQQQEMFIERLLNEDRKKGFDLSKDVLMRAYLLKTAERSYRLVWSHHHILLDGWCLGIIMRELFVIYENRMNGKASPLKETKPYSDYIKWLERQDQEEARQYWREYLKGYEEQAQLPTLTKRKKSSRYDRREKVIHLSKQLTKQLKELAAKNSVTLHTVIQTIWGLMLTRYTKIDDVVFGTVVSGREANVDGIEDMIGLFINTIPTRIRFNEQARFNDCLQKVQEDAIQSNRYNYMNLAEVQALSSLKKDLIDHILVFENYEADEQDFEESQMKTGFKVNEISAAEQSITAFSMSVTPGEELTLVLTYDGNVYDRDIINNIEGHIKRVAEQVTANENRKIAEIDMLAEEERKTLLYEFNRTNADYPRNKTIHQLFEEQAERTPGHTAVVFEKEELSYKALNERSNQLAGLLREKGVKPDMIVGVMAERSVEMIVGMLAVLKAGGAYLPIDPEYPEDRIRYMIEDSGISILLKKADKQIDVDFTCIDMNEKGLAKDMAAENLGHTSGSSDMAYVIYTSGSTGKPKGVMVNHQSIVNTLYWRKQSYGYSTADATLQVPSFSFDSSVEDIFTTLISGAKLVLIRDLRMNPREIIGVLRTHKATNLLAVPSFYLNLLDTIEQPLDDLRFVTVAGEGFNESLIRQHFEKLPNVKLFNEYGPTENSVCSTRGELRKDDEKVVIGRPISNHKVYILNHNQQLLPLGTPGELCLSGEGLARGYLNRPDLTLEKFVPNPFAPGESMYRTGDLARFLPDGQIEYLGRIDHQVKIRGFRIELGEIENQLLKIEGIDAAAVMAREDQAGGKYLCAYIVADKAAGVADVRKCLLKELPDYMVPSYFVKLDQLPLTANGKIDRKALPEPSSTISEATYEAPRNRTEEKLVSIWEDVLGIENIGISHNFFELGGHSLKAAALTAKLHKEMKIEVPLRQLFETPTIKDIGDFIESMKESPYASITQAEEKEYYALSSAQRRLYILNQIEPGGLSYNMPFAMKIAGDFDVDRFEDAFRQLIERHEALRTAFVMVDGEPVQKIEKEVDFKVKYGRLGQDPLEEKIKAFIKPFALEKAPLLRAEVLKASGDEHVLMLDMHHIISDGVSMAIFTRELAELYEGKTLPPLTIQYKDFSEWQKLFYQKDEVKRQEDYWLNVFQGEVPVLNLPADEKRPQKRSIEGDIVQFEIDGETSAMLNKLAKENGATMYMLLLAGYTTLLAKYTGQEDIVVGSPIAGRHHSDLKHVIGLFINTLAMRNHPKGDMPFADYLKEVKETALKAYENQDYPFDELVEKLDVKRDMSRHPLFDTMLVLQNFDGDEADIDGLTFQPLQTEVNISKFDLTLTAAETNEGIQCVFNYSTKLFKRSTIERMAGHLINILKEAANDPHMPLSDVNMLSDEEMNALLDQNQGKQADYPQDQTVHQLFEQQADKTPEQTAVVYADEKLTYRELNERANQLARLLRDKGADADQPVAIMIEPSLEMIISMLAVLKAGAAYVPIEPEQLAKRTNEILSDSRAAILLVKGSVKENVAFAGEIVNVADGLIDAKVASNLSASGSADQNAYIIYTSGSTGKPKGVFVRHGNVVNYTTWFMKEAGLTENDKAMLVSSYAFDLGYTSIFSALLSGSELHIARKECYTNAHRALKYIKENGITYIKLTPSLFNIFVNDPGFSAEKPCATLRLVVLGGEMINTRDVETFYNQYPDHVVMNHYGPTETTIGSVFKVIDPEHLDSFKECPVIGTPIHNTNAYVLDENMKLLPEGVYGELCIAGAGVTGGYVNRPDETKEKFIENPFAPHTKMYRTGDLARRLSDGNIELAGRIDTQVKVRGYRIEPEEIKNRLLAHDDIKEAFIAAREDHKGAKQLCAYFTADAELPFEDIRTYLMHELPEYMIPSSFVQIEKMPLSANGKIDTAALPEPQPGKETEYEPPRNETEEKLVQIWEEVLGIDKIGITHHFFAAGGDSIKALQMISRLSREGLSLEMKDLFANPQIKSLSRYVKAESDKSASYETVEGEVLLTPIQQEYFSLNKTDRNHYNHAVMLYRKNGFDESIVKRVFKEIIKHHDALRTVFTEEDGKIIQYNRGPDKQLFDLFVYDVSSENDQPQKVYQLATELQQSIDIETGPLVKLAVFKTNNGDHLLIIIHHLVVDGISWRILFEDLAIGYSQLANGEKVEFYPKTASYQAYARHIAEYAKSVKLLSEKQYWLKAIAEGVEFLDMNENAGAFKVEDSRTFSTELEKEETKRLLRETNRAYHTEINDILITALLVAARDMNGQNQLRITLEGHGREQVADGIDISRTVGWFTSKYPVFIDLGQETDMSRTIKMVKEHLRNVPNKGIGYGILKYLTRDSEIAKGAASPILFNYLGQLDEDINSGEFSSSHLSPGEAAGKGITREHPLEINAVVFRGKLAIQTTYNTRAYSEDVVRAFAQNYKEALKAVIRHCAEREETEKTPSDYGDKGISLDQLEEIKLKYKGMEIEKIYPLANMQRGMLFHALEDKESQAYFEQMAINMKGLIDERLFAETFNDIMERHEILRASIEYEITDEPRNVIIKDRKINLDYHDLRKQSPAEREQVIQAYRKADREKGFRLNSEPLIRAALMRTEDDSYTFIWTNHHILLDGWSRGIIMGELFHMYHMKEARQKHRLEEARPYSDYIGWLQQQDKEAAKAYWRNYLSGFTEKSPISVLAGSSGHAKYKRKEAVIEFPEQLTGRITELASRNNVTFHTVLQCIWGMLLARYNQTDDVVFGTVISGRDAQVTGIEKMVGLFINTVPTRIRLDKSQSFKELIKSVQEQALEGRTYHDMNLSEVQSLSELKRELLDHILIFENYAVDQSAFETSGKRGAGFVFEEIHAEEQTNYGFNIVAVPGERLVIKLTYDGNIYHDHIIAGIKGHLQQVMEQVVQHEDQSLNDITVLSEAERNRLLYEWNDTKAEYPNQTIHRLFEEQAEKTPELAAVVSGNDKLTYRELNEKSNQLARYLRDKGVKADTIVAIMAERSPEMVVGIMGILKAGGAYLPIDPDYPEERIKYMLEDSGAAIILADHKQDLGTLHQEAVELTGDFSSYPADNLEPAGNADSLAYIIYTSGSTGKPKGVMIRQRGLVNYITWADRVYVQGEQLDFALYSSIAFDLTVTSIFTPLISGNRVIVYRHSEDGEPLIRKVFRDQKAGIVKLTPSHLSLVKDMDASGSSIKRLIVGGEDLKTELAKEITERFHHNIEIYNEYGPTETVVGCMIYQYDAGWDRQVSVPIGKPASNVQLYILDERQEVQPVGIAGELYISGDGVAKGYLNKPELTSEKFLPNPFLPGERMYRTGDLAKMRPDGHIEYLGRIDHQVKIRGYRIELGEIEHQLLRHSDIKEAAVAAKTDQNNDQVLCAYVVSERDITQKDIKTFLAKELPEYMVPSYLLKLDELPLTPNGKVDLKALPEPDRSAGALLEYEPPRHELEEKMAAIWEDILNIEQIGINANIFDIGANSLNVMSFVSRLYAELGFRVPFKDIFSKPTIKELSDFLKHAQDLLKDYTDDCMQLTRAEEGGKNLFCFPPAASMGIAYMGLAKHLKQHSVYSFNFIPSANRIRKYADIIKNIQGEGPYTLIGYSSGGILAFDVAKELNRQGYEVEDLIIIDSKYRTKAEKHQFTEEEYREEISKTFELEKYRDVEKLLSDYLVDLVMKSYVYIQNTVTTGAIDGHISYIKSSDNQRGENMMMWEKATSKTFTVVQGAGTHMQMISKSHPDILERNARLIHDIINKTVKI</sequence>
<keyword id="KW-0045">Antibiotic biosynthesis</keyword>
<keyword id="KW-0067">ATP-binding</keyword>
<keyword id="KW-0378">Hydrolase</keyword>
<keyword id="KW-0413">Isomerase</keyword>
<keyword id="KW-0436">Ligase</keyword>
<keyword id="KW-0511">Multifunctional enzyme</keyword>
<keyword id="KW-0547">Nucleotide-binding</keyword>
<keyword id="KW-0596">Phosphopantetheine</keyword>
<keyword id="KW-0597">Phosphoprotein</keyword>
<keyword id="KW-0677">Repeat</keyword>
<protein>
    <recommendedName>
        <fullName>Bacitracin synthase 3</fullName>
        <shortName>BA3</shortName>
    </recommendedName>
    <domain>
        <recommendedName>
            <fullName>ATP-dependent isoleucine adenylase</fullName>
            <shortName>IleA</shortName>
        </recommendedName>
        <alternativeName>
            <fullName>Isoleucine activase</fullName>
        </alternativeName>
    </domain>
    <domain>
        <recommendedName>
            <fullName>ATP-dependent D-phenylalanine adenylase</fullName>
            <shortName>D-PheA</shortName>
        </recommendedName>
        <alternativeName>
            <fullName>D-phenylalanine activase</fullName>
        </alternativeName>
    </domain>
    <domain>
        <recommendedName>
            <fullName>ATP-dependent histidine adenylase</fullName>
            <shortName>HisA</shortName>
        </recommendedName>
        <alternativeName>
            <fullName>Histidine activase</fullName>
        </alternativeName>
    </domain>
    <domain>
        <recommendedName>
            <fullName>ATP-dependent D-aspartate adenylase</fullName>
            <shortName>D-AspA</shortName>
        </recommendedName>
        <alternativeName>
            <fullName>D-aspartate activase</fullName>
        </alternativeName>
    </domain>
    <domain>
        <recommendedName>
            <fullName>ATP-dependent asparagine adenylase</fullName>
            <shortName>AsnA</shortName>
        </recommendedName>
        <alternativeName>
            <fullName>Asparagine activase</fullName>
        </alternativeName>
    </domain>
    <domain>
        <recommendedName>
            <fullName>Aspartate racemase</fullName>
            <ecNumber>5.1.1.13</ecNumber>
        </recommendedName>
    </domain>
    <domain>
        <recommendedName>
            <fullName>Phenylalanine racemase [ATP hydrolyzing]</fullName>
            <ecNumber>5.1.1.11</ecNumber>
        </recommendedName>
    </domain>
</protein>
<reference key="1">
    <citation type="journal article" date="1997" name="Chem. Biol.">
        <title>The bacitracin biosynthesis operon of Bacillus licheniformis ATCC 10716: molecular characterization of three multi-modular peptide synthetases.</title>
        <authorList>
            <person name="Konz D."/>
            <person name="Klens A."/>
            <person name="Schoergendorfer K."/>
            <person name="Marahiel M.A."/>
        </authorList>
    </citation>
    <scope>NUCLEOTIDE SEQUENCE [GENOMIC DNA]</scope>
    <source>
        <strain>ATCC 10716 / DSM 603 / NBRC 12199 / NCIMB 8874 / Tracy I</strain>
    </source>
</reference>
<gene>
    <name type="primary">bacC</name>
</gene>
<feature type="chain" id="PRO_0000193084" description="Bacitracin synthase 3">
    <location>
        <begin position="1"/>
        <end position="6359"/>
    </location>
</feature>
<feature type="domain" description="Carrier 1" evidence="1">
    <location>
        <begin position="961"/>
        <end position="1036"/>
    </location>
</feature>
<feature type="domain" description="Carrier 2" evidence="1">
    <location>
        <begin position="1993"/>
        <end position="2067"/>
    </location>
</feature>
<feature type="domain" description="Carrier 3" evidence="1">
    <location>
        <begin position="3497"/>
        <end position="3572"/>
    </location>
</feature>
<feature type="domain" description="Carrier 4" evidence="1">
    <location>
        <begin position="4539"/>
        <end position="4613"/>
    </location>
</feature>
<feature type="domain" description="Carrier 5" evidence="1">
    <location>
        <begin position="6047"/>
        <end position="6122"/>
    </location>
</feature>
<feature type="region of interest" description="Domain 1 (isoleucine-activating)">
    <location>
        <begin position="461"/>
        <end position="1034"/>
    </location>
</feature>
<feature type="region of interest" description="Disordered" evidence="2">
    <location>
        <begin position="941"/>
        <end position="962"/>
    </location>
</feature>
<feature type="region of interest" description="Domain 2 (D-phenylalanine-activating)">
    <location>
        <begin position="1517"/>
        <end position="2064"/>
    </location>
</feature>
<feature type="region of interest" description="Domain 3 (histidine-activating)">
    <location>
        <begin position="2999"/>
        <end position="3570"/>
    </location>
</feature>
<feature type="region of interest" description="Domain 4 (D-aspartic acid-activating)">
    <location>
        <begin position="4047"/>
        <end position="4612"/>
    </location>
</feature>
<feature type="region of interest" description="Disordered" evidence="2">
    <location>
        <begin position="4521"/>
        <end position="4544"/>
    </location>
</feature>
<feature type="region of interest" description="Domain 5 (asparagine-activating)">
    <location>
        <begin position="5549"/>
        <end position="6129"/>
    </location>
</feature>
<feature type="compositionally biased region" description="Basic and acidic residues" evidence="2">
    <location>
        <begin position="941"/>
        <end position="953"/>
    </location>
</feature>
<feature type="compositionally biased region" description="Basic and acidic residues" evidence="2">
    <location>
        <begin position="4531"/>
        <end position="4544"/>
    </location>
</feature>
<feature type="modified residue" description="O-(pantetheine 4'-phosphoryl)serine" evidence="1">
    <location>
        <position position="996"/>
    </location>
</feature>
<feature type="modified residue" description="O-(pantetheine 4'-phosphoryl)serine" evidence="1">
    <location>
        <position position="2028"/>
    </location>
</feature>
<feature type="modified residue" description="O-(pantetheine 4'-phosphoryl)serine" evidence="1">
    <location>
        <position position="3532"/>
    </location>
</feature>
<feature type="modified residue" description="O-(pantetheine 4'-phosphoryl)serine" evidence="1">
    <location>
        <position position="4574"/>
    </location>
</feature>
<feature type="modified residue" description="O-(pantetheine 4'-phosphoryl)serine" evidence="1">
    <location>
        <position position="6082"/>
    </location>
</feature>